<organism>
    <name type="scientific">Hyperthermus butylicus (strain DSM 5456 / JCM 9403 / PLM1-5)</name>
    <dbReference type="NCBI Taxonomy" id="415426"/>
    <lineage>
        <taxon>Archaea</taxon>
        <taxon>Thermoproteota</taxon>
        <taxon>Thermoprotei</taxon>
        <taxon>Desulfurococcales</taxon>
        <taxon>Pyrodictiaceae</taxon>
        <taxon>Hyperthermus</taxon>
    </lineage>
</organism>
<gene>
    <name evidence="1" type="primary">srp54</name>
    <name type="ordered locus">Hbut_1662</name>
</gene>
<sequence>MPGLDDIRRAVSKLLKRSGPYENIVNEFIRDLQRALISADVNVRLVFNLTKRIRERALKEQPPPGLSRREWLVKLTYDELVKLFGGEYEPEVKPPYTPYVIMMVGVQGSGKTTTVGKLAKFYRGMGYRVGVVAADTYRPGAYEQLKQLADRAGAMFYGEPGSKDPVGIARRGVEELKQRGADIVIVDTAGRHGYGEEEALLDEMKRIAEAIKPDEVVLVIDAAMGQKSYDLAKRFHEATPVGSIIVTKMDGTAKGGGALSAVAATGARIKFIGTGEDIDEIEVFRPKRFVARLLGMGDLESLLEKIERLRGVEEFEKTVAEMMSGKITFRTIYKQLQQVTKLGPFRKILQMIPGISTMLESLDEAARLSEEKVKKWLTIMNSMTYEELDNPNLLEERSRVKRIAVGAGVEPSEVRELYNYYKSVKKMMRQLKKRKDLLERFARLGGV</sequence>
<comment type="function">
    <text evidence="1">Involved in targeting and insertion of nascent membrane proteins into the cytoplasmic membrane. Binds to the hydrophobic signal sequence of the ribosome-nascent chain (RNC) as it emerges from the ribosomes. The SRP-RNC complex is then targeted to the cytoplasmic membrane where it interacts with the SRP receptor FtsY.</text>
</comment>
<comment type="catalytic activity">
    <reaction evidence="1">
        <text>GTP + H2O = GDP + phosphate + H(+)</text>
        <dbReference type="Rhea" id="RHEA:19669"/>
        <dbReference type="ChEBI" id="CHEBI:15377"/>
        <dbReference type="ChEBI" id="CHEBI:15378"/>
        <dbReference type="ChEBI" id="CHEBI:37565"/>
        <dbReference type="ChEBI" id="CHEBI:43474"/>
        <dbReference type="ChEBI" id="CHEBI:58189"/>
        <dbReference type="EC" id="3.6.5.4"/>
    </reaction>
</comment>
<comment type="subunit">
    <text evidence="1">Part of the signal recognition particle protein translocation system, which is composed of SRP and FtsY. Archaeal SRP consists of a 7S RNA molecule of 300 nucleotides and two protein subunits: SRP54 and SRP19.</text>
</comment>
<comment type="subcellular location">
    <subcellularLocation>
        <location evidence="1">Cytoplasm</location>
    </subcellularLocation>
    <text evidence="1">The SRP-RNC complex is targeted to the cytoplasmic membrane.</text>
</comment>
<comment type="domain">
    <text evidence="1">Composed of three domains: the N-terminal N domain, which is responsible for interactions with the ribosome, the central G domain, which binds GTP, and the C-terminal M domain, which binds the RNA and the signal sequence of the RNC.</text>
</comment>
<comment type="similarity">
    <text evidence="1">Belongs to the GTP-binding SRP family. SRP54 subfamily.</text>
</comment>
<feature type="chain" id="PRO_0000322242" description="Signal recognition particle 54 kDa protein">
    <location>
        <begin position="1"/>
        <end position="447"/>
    </location>
</feature>
<feature type="binding site" evidence="1">
    <location>
        <begin position="105"/>
        <end position="112"/>
    </location>
    <ligand>
        <name>GTP</name>
        <dbReference type="ChEBI" id="CHEBI:37565"/>
    </ligand>
</feature>
<feature type="binding site" evidence="1">
    <location>
        <begin position="187"/>
        <end position="191"/>
    </location>
    <ligand>
        <name>GTP</name>
        <dbReference type="ChEBI" id="CHEBI:37565"/>
    </ligand>
</feature>
<feature type="binding site" evidence="1">
    <location>
        <begin position="247"/>
        <end position="250"/>
    </location>
    <ligand>
        <name>GTP</name>
        <dbReference type="ChEBI" id="CHEBI:37565"/>
    </ligand>
</feature>
<evidence type="ECO:0000255" key="1">
    <source>
        <dbReference type="HAMAP-Rule" id="MF_00306"/>
    </source>
</evidence>
<proteinExistence type="inferred from homology"/>
<accession>A2BNB5</accession>
<keyword id="KW-0963">Cytoplasm</keyword>
<keyword id="KW-0342">GTP-binding</keyword>
<keyword id="KW-0378">Hydrolase</keyword>
<keyword id="KW-0547">Nucleotide-binding</keyword>
<keyword id="KW-1185">Reference proteome</keyword>
<keyword id="KW-0687">Ribonucleoprotein</keyword>
<keyword id="KW-0694">RNA-binding</keyword>
<keyword id="KW-0733">Signal recognition particle</keyword>
<protein>
    <recommendedName>
        <fullName evidence="1">Signal recognition particle 54 kDa protein</fullName>
        <shortName evidence="1">SRP54</shortName>
        <ecNumber evidence="1">3.6.5.4</ecNumber>
    </recommendedName>
</protein>
<reference key="1">
    <citation type="journal article" date="2007" name="Archaea">
        <title>The genome of Hyperthermus butylicus: a sulfur-reducing, peptide fermenting, neutrophilic Crenarchaeote growing up to 108 degrees C.</title>
        <authorList>
            <person name="Bruegger K."/>
            <person name="Chen L."/>
            <person name="Stark M."/>
            <person name="Zibat A."/>
            <person name="Redder P."/>
            <person name="Ruepp A."/>
            <person name="Awayez M."/>
            <person name="She Q."/>
            <person name="Garrett R.A."/>
            <person name="Klenk H.-P."/>
        </authorList>
    </citation>
    <scope>NUCLEOTIDE SEQUENCE [LARGE SCALE GENOMIC DNA]</scope>
    <source>
        <strain>DSM 5456 / JCM 9403 / PLM1-5</strain>
    </source>
</reference>
<name>SRP54_HYPBU</name>
<dbReference type="EC" id="3.6.5.4" evidence="1"/>
<dbReference type="EMBL" id="CP000493">
    <property type="protein sequence ID" value="ABM81476.1"/>
    <property type="molecule type" value="Genomic_DNA"/>
</dbReference>
<dbReference type="RefSeq" id="WP_011822794.1">
    <property type="nucleotide sequence ID" value="NC_008818.1"/>
</dbReference>
<dbReference type="SMR" id="A2BNB5"/>
<dbReference type="STRING" id="415426.Hbut_1662"/>
<dbReference type="EnsemblBacteria" id="ABM81476">
    <property type="protein sequence ID" value="ABM81476"/>
    <property type="gene ID" value="Hbut_1662"/>
</dbReference>
<dbReference type="GeneID" id="4782384"/>
<dbReference type="KEGG" id="hbu:Hbut_1662"/>
<dbReference type="eggNOG" id="arCOG01228">
    <property type="taxonomic scope" value="Archaea"/>
</dbReference>
<dbReference type="HOGENOM" id="CLU_009301_6_0_2"/>
<dbReference type="OrthoDB" id="52849at2157"/>
<dbReference type="Proteomes" id="UP000002593">
    <property type="component" value="Chromosome"/>
</dbReference>
<dbReference type="GO" id="GO:0048500">
    <property type="term" value="C:signal recognition particle"/>
    <property type="evidence" value="ECO:0007669"/>
    <property type="project" value="UniProtKB-UniRule"/>
</dbReference>
<dbReference type="GO" id="GO:0008312">
    <property type="term" value="F:7S RNA binding"/>
    <property type="evidence" value="ECO:0007669"/>
    <property type="project" value="UniProtKB-UniRule"/>
</dbReference>
<dbReference type="GO" id="GO:0016887">
    <property type="term" value="F:ATP hydrolysis activity"/>
    <property type="evidence" value="ECO:0007669"/>
    <property type="project" value="InterPro"/>
</dbReference>
<dbReference type="GO" id="GO:0005525">
    <property type="term" value="F:GTP binding"/>
    <property type="evidence" value="ECO:0007669"/>
    <property type="project" value="UniProtKB-UniRule"/>
</dbReference>
<dbReference type="GO" id="GO:0003924">
    <property type="term" value="F:GTPase activity"/>
    <property type="evidence" value="ECO:0007669"/>
    <property type="project" value="UniProtKB-UniRule"/>
</dbReference>
<dbReference type="GO" id="GO:0006614">
    <property type="term" value="P:SRP-dependent cotranslational protein targeting to membrane"/>
    <property type="evidence" value="ECO:0007669"/>
    <property type="project" value="InterPro"/>
</dbReference>
<dbReference type="CDD" id="cd17875">
    <property type="entry name" value="SRP54_G"/>
    <property type="match status" value="1"/>
</dbReference>
<dbReference type="FunFam" id="3.40.50.300:FF:000022">
    <property type="entry name" value="Signal recognition particle 54 kDa subunit"/>
    <property type="match status" value="1"/>
</dbReference>
<dbReference type="Gene3D" id="3.40.50.300">
    <property type="entry name" value="P-loop containing nucleotide triphosphate hydrolases"/>
    <property type="match status" value="1"/>
</dbReference>
<dbReference type="Gene3D" id="1.20.120.140">
    <property type="entry name" value="Signal recognition particle SRP54, nucleotide-binding domain"/>
    <property type="match status" value="1"/>
</dbReference>
<dbReference type="Gene3D" id="1.10.260.30">
    <property type="entry name" value="Signal recognition particle, SRP54 subunit, M-domain"/>
    <property type="match status" value="1"/>
</dbReference>
<dbReference type="HAMAP" id="MF_00306">
    <property type="entry name" value="SRP54"/>
    <property type="match status" value="1"/>
</dbReference>
<dbReference type="InterPro" id="IPR003593">
    <property type="entry name" value="AAA+_ATPase"/>
</dbReference>
<dbReference type="InterPro" id="IPR027417">
    <property type="entry name" value="P-loop_NTPase"/>
</dbReference>
<dbReference type="InterPro" id="IPR036891">
    <property type="entry name" value="Signal_recog_part_SRP54_M_sf"/>
</dbReference>
<dbReference type="InterPro" id="IPR013822">
    <property type="entry name" value="Signal_recog_particl_SRP54_hlx"/>
</dbReference>
<dbReference type="InterPro" id="IPR004125">
    <property type="entry name" value="Signal_recog_particle_SRP54_M"/>
</dbReference>
<dbReference type="InterPro" id="IPR036225">
    <property type="entry name" value="SRP/SRP_N"/>
</dbReference>
<dbReference type="InterPro" id="IPR022941">
    <property type="entry name" value="SRP54"/>
</dbReference>
<dbReference type="InterPro" id="IPR000897">
    <property type="entry name" value="SRP54_GTPase_dom"/>
</dbReference>
<dbReference type="InterPro" id="IPR042101">
    <property type="entry name" value="SRP54_N_sf"/>
</dbReference>
<dbReference type="PANTHER" id="PTHR11564">
    <property type="entry name" value="SIGNAL RECOGNITION PARTICLE 54K PROTEIN SRP54"/>
    <property type="match status" value="1"/>
</dbReference>
<dbReference type="PANTHER" id="PTHR11564:SF5">
    <property type="entry name" value="SIGNAL RECOGNITION PARTICLE SUBUNIT SRP54"/>
    <property type="match status" value="1"/>
</dbReference>
<dbReference type="Pfam" id="PF00448">
    <property type="entry name" value="SRP54"/>
    <property type="match status" value="1"/>
</dbReference>
<dbReference type="Pfam" id="PF02881">
    <property type="entry name" value="SRP54_N"/>
    <property type="match status" value="1"/>
</dbReference>
<dbReference type="Pfam" id="PF02978">
    <property type="entry name" value="SRP_SPB"/>
    <property type="match status" value="1"/>
</dbReference>
<dbReference type="SMART" id="SM00382">
    <property type="entry name" value="AAA"/>
    <property type="match status" value="1"/>
</dbReference>
<dbReference type="SMART" id="SM00962">
    <property type="entry name" value="SRP54"/>
    <property type="match status" value="1"/>
</dbReference>
<dbReference type="SMART" id="SM00963">
    <property type="entry name" value="SRP54_N"/>
    <property type="match status" value="1"/>
</dbReference>
<dbReference type="SUPFAM" id="SSF47364">
    <property type="entry name" value="Domain of the SRP/SRP receptor G-proteins"/>
    <property type="match status" value="1"/>
</dbReference>
<dbReference type="SUPFAM" id="SSF52540">
    <property type="entry name" value="P-loop containing nucleoside triphosphate hydrolases"/>
    <property type="match status" value="1"/>
</dbReference>
<dbReference type="SUPFAM" id="SSF47446">
    <property type="entry name" value="Signal peptide-binding domain"/>
    <property type="match status" value="1"/>
</dbReference>